<protein>
    <recommendedName>
        <fullName evidence="1">Small ribosomal subunit protein bS20</fullName>
    </recommendedName>
    <alternativeName>
        <fullName evidence="3">30S ribosomal protein S20</fullName>
    </alternativeName>
</protein>
<evidence type="ECO:0000255" key="1">
    <source>
        <dbReference type="HAMAP-Rule" id="MF_00500"/>
    </source>
</evidence>
<evidence type="ECO:0000256" key="2">
    <source>
        <dbReference type="SAM" id="MobiDB-lite"/>
    </source>
</evidence>
<evidence type="ECO:0000305" key="3"/>
<dbReference type="EMBL" id="BA000021">
    <property type="protein sequence ID" value="BAC24442.1"/>
    <property type="molecule type" value="Genomic_DNA"/>
</dbReference>
<dbReference type="SMR" id="Q8D2Q8"/>
<dbReference type="STRING" id="36870.gene:10368789"/>
<dbReference type="KEGG" id="wbr:rpsT"/>
<dbReference type="eggNOG" id="COG0268">
    <property type="taxonomic scope" value="Bacteria"/>
</dbReference>
<dbReference type="HOGENOM" id="CLU_160655_4_0_6"/>
<dbReference type="OrthoDB" id="9807974at2"/>
<dbReference type="Proteomes" id="UP000000562">
    <property type="component" value="Chromosome"/>
</dbReference>
<dbReference type="GO" id="GO:0005829">
    <property type="term" value="C:cytosol"/>
    <property type="evidence" value="ECO:0007669"/>
    <property type="project" value="TreeGrafter"/>
</dbReference>
<dbReference type="GO" id="GO:0015935">
    <property type="term" value="C:small ribosomal subunit"/>
    <property type="evidence" value="ECO:0007669"/>
    <property type="project" value="TreeGrafter"/>
</dbReference>
<dbReference type="GO" id="GO:0070181">
    <property type="term" value="F:small ribosomal subunit rRNA binding"/>
    <property type="evidence" value="ECO:0007669"/>
    <property type="project" value="TreeGrafter"/>
</dbReference>
<dbReference type="GO" id="GO:0003735">
    <property type="term" value="F:structural constituent of ribosome"/>
    <property type="evidence" value="ECO:0007669"/>
    <property type="project" value="InterPro"/>
</dbReference>
<dbReference type="GO" id="GO:0006412">
    <property type="term" value="P:translation"/>
    <property type="evidence" value="ECO:0007669"/>
    <property type="project" value="UniProtKB-UniRule"/>
</dbReference>
<dbReference type="FunFam" id="1.20.58.110:FF:000001">
    <property type="entry name" value="30S ribosomal protein S20"/>
    <property type="match status" value="1"/>
</dbReference>
<dbReference type="Gene3D" id="1.20.58.110">
    <property type="entry name" value="Ribosomal protein S20"/>
    <property type="match status" value="1"/>
</dbReference>
<dbReference type="HAMAP" id="MF_00500">
    <property type="entry name" value="Ribosomal_bS20"/>
    <property type="match status" value="1"/>
</dbReference>
<dbReference type="InterPro" id="IPR002583">
    <property type="entry name" value="Ribosomal_bS20"/>
</dbReference>
<dbReference type="InterPro" id="IPR036510">
    <property type="entry name" value="Ribosomal_bS20_sf"/>
</dbReference>
<dbReference type="NCBIfam" id="TIGR00029">
    <property type="entry name" value="S20"/>
    <property type="match status" value="1"/>
</dbReference>
<dbReference type="PANTHER" id="PTHR33398">
    <property type="entry name" value="30S RIBOSOMAL PROTEIN S20"/>
    <property type="match status" value="1"/>
</dbReference>
<dbReference type="PANTHER" id="PTHR33398:SF1">
    <property type="entry name" value="SMALL RIBOSOMAL SUBUNIT PROTEIN BS20C"/>
    <property type="match status" value="1"/>
</dbReference>
<dbReference type="Pfam" id="PF01649">
    <property type="entry name" value="Ribosomal_S20p"/>
    <property type="match status" value="1"/>
</dbReference>
<dbReference type="SUPFAM" id="SSF46992">
    <property type="entry name" value="Ribosomal protein S20"/>
    <property type="match status" value="1"/>
</dbReference>
<gene>
    <name evidence="1" type="primary">rpsT</name>
    <name type="ordered locus">WIGBR2960</name>
</gene>
<name>RS20_WIGBR</name>
<comment type="function">
    <text evidence="1">Binds directly to 16S ribosomal RNA.</text>
</comment>
<comment type="similarity">
    <text evidence="1">Belongs to the bacterial ribosomal protein bS20 family.</text>
</comment>
<feature type="chain" id="PRO_0000168060" description="Small ribosomal subunit protein bS20">
    <location>
        <begin position="1"/>
        <end position="88"/>
    </location>
</feature>
<feature type="region of interest" description="Disordered" evidence="2">
    <location>
        <begin position="1"/>
        <end position="26"/>
    </location>
</feature>
<feature type="compositionally biased region" description="Basic residues" evidence="2">
    <location>
        <begin position="1"/>
        <end position="22"/>
    </location>
</feature>
<accession>Q8D2Q8</accession>
<proteinExistence type="inferred from homology"/>
<reference key="1">
    <citation type="journal article" date="2002" name="Nat. Genet.">
        <title>Genome sequence of the endocellular obligate symbiont of tsetse flies, Wigglesworthia glossinidia.</title>
        <authorList>
            <person name="Akman L."/>
            <person name="Yamashita A."/>
            <person name="Watanabe H."/>
            <person name="Oshima K."/>
            <person name="Shiba T."/>
            <person name="Hattori M."/>
            <person name="Aksoy S."/>
        </authorList>
    </citation>
    <scope>NUCLEOTIDE SEQUENCE [LARGE SCALE GENOMIC DNA]</scope>
</reference>
<keyword id="KW-1185">Reference proteome</keyword>
<keyword id="KW-0687">Ribonucleoprotein</keyword>
<keyword id="KW-0689">Ribosomal protein</keyword>
<keyword id="KW-0694">RNA-binding</keyword>
<keyword id="KW-0699">rRNA-binding</keyword>
<organism>
    <name type="scientific">Wigglesworthia glossinidia brevipalpis</name>
    <dbReference type="NCBI Taxonomy" id="36870"/>
    <lineage>
        <taxon>Bacteria</taxon>
        <taxon>Pseudomonadati</taxon>
        <taxon>Pseudomonadota</taxon>
        <taxon>Gammaproteobacteria</taxon>
        <taxon>Enterobacterales</taxon>
        <taxon>Erwiniaceae</taxon>
        <taxon>Wigglesworthia</taxon>
    </lineage>
</organism>
<sequence length="88" mass="10465">MANIKSSKKRSIQSEKKRKYNSSKKSMIRSFIKKVKNSILKKEKDTINNSFIEMQSILDRYAKKNLIHKNKASRLKSRLSKKIKFIFK</sequence>